<organism>
    <name type="scientific">Aedes aegypti</name>
    <name type="common">Yellowfever mosquito</name>
    <name type="synonym">Culex aegypti</name>
    <dbReference type="NCBI Taxonomy" id="7159"/>
    <lineage>
        <taxon>Eukaryota</taxon>
        <taxon>Metazoa</taxon>
        <taxon>Ecdysozoa</taxon>
        <taxon>Arthropoda</taxon>
        <taxon>Hexapoda</taxon>
        <taxon>Insecta</taxon>
        <taxon>Pterygota</taxon>
        <taxon>Neoptera</taxon>
        <taxon>Endopterygota</taxon>
        <taxon>Diptera</taxon>
        <taxon>Nematocera</taxon>
        <taxon>Culicoidea</taxon>
        <taxon>Culicidae</taxon>
        <taxon>Culicinae</taxon>
        <taxon>Aedini</taxon>
        <taxon>Aedes</taxon>
        <taxon>Stegomyia</taxon>
    </lineage>
</organism>
<sequence>MALIMKYIDSMHHYMDKYGDPRTKDWPLMSSPFPTLALCLGYVYLVKVLGPRLMENRKPFQLRNTLILYNFVQVVFSAWLFYEIGISGWLTGHYNFRCQPVDYSNHPKTLRMVHACWWYYFSKFTEFFDTFFFVMRKKTSQVSTLHVIHHGCMPMSVWFGVKFTPGGHSTFFGLLNTFVHIVMYTYYLFTAMGPQFQKYLWWKKYLTSLQMVQFVAIMVHAFQLLFIDCNYPKAFVWWIGMHAVMFLFLFNEFYQSTYKATKRRRAAAAEARRLAAEEAKLQNGSAVSSNGSAITANGHHGKNGSVHHHSNGSATSNGTSLLSNGVGSNKAADYYVRGDLPAEIEITQRQPSSRNQVQ</sequence>
<reference key="1">
    <citation type="journal article" date="2007" name="BMC Genomics">
        <title>An annotated catalogue of salivary gland transcripts in the adult female mosquito, Aedes aegypti.</title>
        <authorList>
            <person name="Ribeiro J.M.C."/>
            <person name="Arca B."/>
            <person name="Lombardo F."/>
            <person name="Calvo E."/>
            <person name="Phan V.M."/>
            <person name="Chandra P.K."/>
            <person name="Wikel S.K."/>
        </authorList>
    </citation>
    <scope>NUCLEOTIDE SEQUENCE [LARGE SCALE MRNA]</scope>
    <source>
        <strain>Black-eyed Liverpool</strain>
        <tissue>Salivary gland</tissue>
    </source>
</reference>
<reference key="2">
    <citation type="journal article" date="2007" name="Science">
        <title>Genome sequence of Aedes aegypti, a major arbovirus vector.</title>
        <authorList>
            <person name="Nene V."/>
            <person name="Wortman J.R."/>
            <person name="Lawson D."/>
            <person name="Haas B.J."/>
            <person name="Kodira C.D."/>
            <person name="Tu Z.J."/>
            <person name="Loftus B.J."/>
            <person name="Xi Z."/>
            <person name="Megy K."/>
            <person name="Grabherr M."/>
            <person name="Ren Q."/>
            <person name="Zdobnov E.M."/>
            <person name="Lobo N.F."/>
            <person name="Campbell K.S."/>
            <person name="Brown S.E."/>
            <person name="Bonaldo M.F."/>
            <person name="Zhu J."/>
            <person name="Sinkins S.P."/>
            <person name="Hogenkamp D.G."/>
            <person name="Amedeo P."/>
            <person name="Arensburger P."/>
            <person name="Atkinson P.W."/>
            <person name="Bidwell S.L."/>
            <person name="Biedler J."/>
            <person name="Birney E."/>
            <person name="Bruggner R.V."/>
            <person name="Costas J."/>
            <person name="Coy M.R."/>
            <person name="Crabtree J."/>
            <person name="Crawford M."/>
            <person name="DeBruyn B."/>
            <person name="DeCaprio D."/>
            <person name="Eiglmeier K."/>
            <person name="Eisenstadt E."/>
            <person name="El-Dorry H."/>
            <person name="Gelbart W.M."/>
            <person name="Gomes S.L."/>
            <person name="Hammond M."/>
            <person name="Hannick L.I."/>
            <person name="Hogan J.R."/>
            <person name="Holmes M.H."/>
            <person name="Jaffe D."/>
            <person name="Johnston S.J."/>
            <person name="Kennedy R.C."/>
            <person name="Koo H."/>
            <person name="Kravitz S."/>
            <person name="Kriventseva E.V."/>
            <person name="Kulp D."/>
            <person name="Labutti K."/>
            <person name="Lee E."/>
            <person name="Li S."/>
            <person name="Lovin D.D."/>
            <person name="Mao C."/>
            <person name="Mauceli E."/>
            <person name="Menck C.F."/>
            <person name="Miller J.R."/>
            <person name="Montgomery P."/>
            <person name="Mori A."/>
            <person name="Nascimento A.L."/>
            <person name="Naveira H.F."/>
            <person name="Nusbaum C."/>
            <person name="O'Leary S.B."/>
            <person name="Orvis J."/>
            <person name="Pertea M."/>
            <person name="Quesneville H."/>
            <person name="Reidenbach K.R."/>
            <person name="Rogers Y.-H.C."/>
            <person name="Roth C.W."/>
            <person name="Schneider J.R."/>
            <person name="Schatz M."/>
            <person name="Shumway M."/>
            <person name="Stanke M."/>
            <person name="Stinson E.O."/>
            <person name="Tubio J.M.C."/>
            <person name="Vanzee J.P."/>
            <person name="Verjovski-Almeida S."/>
            <person name="Werner D."/>
            <person name="White O.R."/>
            <person name="Wyder S."/>
            <person name="Zeng Q."/>
            <person name="Zhao Q."/>
            <person name="Zhao Y."/>
            <person name="Hill C.A."/>
            <person name="Raikhel A.S."/>
            <person name="Soares M.B."/>
            <person name="Knudson D.L."/>
            <person name="Lee N.H."/>
            <person name="Galagan J."/>
            <person name="Salzberg S.L."/>
            <person name="Paulsen I.T."/>
            <person name="Dimopoulos G."/>
            <person name="Collins F.H."/>
            <person name="Bruce B."/>
            <person name="Fraser-Liggett C.M."/>
            <person name="Severson D.W."/>
        </authorList>
    </citation>
    <scope>NUCLEOTIDE SEQUENCE [LARGE SCALE GENOMIC DNA]</scope>
    <source>
        <strain>LVPib12</strain>
    </source>
</reference>
<gene>
    <name type="ORF">AAEL008004</name>
</gene>
<comment type="function">
    <text evidence="1">Could be implicated in synthesis of very long chain fatty acids.</text>
</comment>
<comment type="catalytic activity">
    <reaction>
        <text>a very-long-chain acyl-CoA + malonyl-CoA + H(+) = a very-long-chain 3-oxoacyl-CoA + CO2 + CoA</text>
        <dbReference type="Rhea" id="RHEA:32727"/>
        <dbReference type="ChEBI" id="CHEBI:15378"/>
        <dbReference type="ChEBI" id="CHEBI:16526"/>
        <dbReference type="ChEBI" id="CHEBI:57287"/>
        <dbReference type="ChEBI" id="CHEBI:57384"/>
        <dbReference type="ChEBI" id="CHEBI:90725"/>
        <dbReference type="ChEBI" id="CHEBI:90736"/>
        <dbReference type="EC" id="2.3.1.199"/>
    </reaction>
</comment>
<comment type="subcellular location">
    <subcellularLocation>
        <location evidence="4">Membrane</location>
        <topology evidence="4">Multi-pass membrane protein</topology>
    </subcellularLocation>
</comment>
<comment type="similarity">
    <text evidence="4">Belongs to the ELO family.</text>
</comment>
<comment type="sequence caution" evidence="4">
    <conflict type="erroneous gene model prediction">
        <sequence resource="EMBL-CDS" id="EAT40247"/>
    </conflict>
</comment>
<evidence type="ECO:0000250" key="1"/>
<evidence type="ECO:0000255" key="2"/>
<evidence type="ECO:0000256" key="3">
    <source>
        <dbReference type="SAM" id="MobiDB-lite"/>
    </source>
</evidence>
<evidence type="ECO:0000305" key="4"/>
<protein>
    <recommendedName>
        <fullName evidence="4">Very long chain fatty acid elongase AAEL008004</fullName>
        <ecNumber>2.3.1.199</ecNumber>
    </recommendedName>
    <alternativeName>
        <fullName>3-keto acyl-CoA synthase AAEL008004</fullName>
    </alternativeName>
    <alternativeName>
        <fullName>Elongation of very long chain fatty acids protein AAEL008004</fullName>
    </alternativeName>
    <alternativeName>
        <fullName>Very-long-chain 3-oxoacyl-CoA synthase AAEL008004</fullName>
    </alternativeName>
</protein>
<accession>Q1HRV8</accession>
<accession>Q0IEV4</accession>
<dbReference type="EC" id="2.3.1.199"/>
<dbReference type="EMBL" id="DQ439986">
    <property type="protein sequence ID" value="ABF18019.1"/>
    <property type="molecule type" value="mRNA"/>
</dbReference>
<dbReference type="EMBL" id="CH477478">
    <property type="protein sequence ID" value="EAT40247.1"/>
    <property type="status" value="ALT_SEQ"/>
    <property type="molecule type" value="Genomic_DNA"/>
</dbReference>
<dbReference type="RefSeq" id="XP_001658783.1">
    <property type="nucleotide sequence ID" value="XM_001658733.1"/>
</dbReference>
<dbReference type="SMR" id="Q1HRV8"/>
<dbReference type="FunCoup" id="Q1HRV8">
    <property type="interactions" value="187"/>
</dbReference>
<dbReference type="STRING" id="7159.Q1HRV8"/>
<dbReference type="PaxDb" id="7159-AAEL008004-PA"/>
<dbReference type="VEuPathDB" id="VectorBase:AAEL024147"/>
<dbReference type="eggNOG" id="KOG3071">
    <property type="taxonomic scope" value="Eukaryota"/>
</dbReference>
<dbReference type="HOGENOM" id="CLU_048483_4_3_1"/>
<dbReference type="InParanoid" id="Q1HRV8"/>
<dbReference type="OrthoDB" id="434092at2759"/>
<dbReference type="Proteomes" id="UP000008820">
    <property type="component" value="Unassembled WGS sequence"/>
</dbReference>
<dbReference type="Proteomes" id="UP000682892">
    <property type="component" value="Unassembled WGS sequence"/>
</dbReference>
<dbReference type="GO" id="GO:0005789">
    <property type="term" value="C:endoplasmic reticulum membrane"/>
    <property type="evidence" value="ECO:0000250"/>
    <property type="project" value="UniProtKB"/>
</dbReference>
<dbReference type="GO" id="GO:0009922">
    <property type="term" value="F:fatty acid elongase activity"/>
    <property type="evidence" value="ECO:0007669"/>
    <property type="project" value="UniProtKB-EC"/>
</dbReference>
<dbReference type="GO" id="GO:0034625">
    <property type="term" value="P:fatty acid elongation, monounsaturated fatty acid"/>
    <property type="evidence" value="ECO:0007669"/>
    <property type="project" value="TreeGrafter"/>
</dbReference>
<dbReference type="GO" id="GO:0034626">
    <property type="term" value="P:fatty acid elongation, polyunsaturated fatty acid"/>
    <property type="evidence" value="ECO:0007669"/>
    <property type="project" value="TreeGrafter"/>
</dbReference>
<dbReference type="GO" id="GO:0019367">
    <property type="term" value="P:fatty acid elongation, saturated fatty acid"/>
    <property type="evidence" value="ECO:0007669"/>
    <property type="project" value="TreeGrafter"/>
</dbReference>
<dbReference type="GO" id="GO:0030148">
    <property type="term" value="P:sphingolipid biosynthetic process"/>
    <property type="evidence" value="ECO:0007669"/>
    <property type="project" value="TreeGrafter"/>
</dbReference>
<dbReference type="GO" id="GO:0042761">
    <property type="term" value="P:very long-chain fatty acid biosynthetic process"/>
    <property type="evidence" value="ECO:0007669"/>
    <property type="project" value="TreeGrafter"/>
</dbReference>
<dbReference type="InterPro" id="IPR002076">
    <property type="entry name" value="ELO_fam"/>
</dbReference>
<dbReference type="PANTHER" id="PTHR11157:SF167">
    <property type="entry name" value="ELONGATION OF VERY LONG CHAIN FATTY ACIDS PROTEIN"/>
    <property type="match status" value="1"/>
</dbReference>
<dbReference type="PANTHER" id="PTHR11157">
    <property type="entry name" value="FATTY ACID ACYL TRANSFERASE-RELATED"/>
    <property type="match status" value="1"/>
</dbReference>
<dbReference type="Pfam" id="PF01151">
    <property type="entry name" value="ELO"/>
    <property type="match status" value="1"/>
</dbReference>
<feature type="chain" id="PRO_0000314472" description="Very long chain fatty acid elongase AAEL008004">
    <location>
        <begin position="1"/>
        <end position="358"/>
    </location>
</feature>
<feature type="transmembrane region" description="Helical" evidence="2">
    <location>
        <begin position="26"/>
        <end position="46"/>
    </location>
</feature>
<feature type="transmembrane region" description="Helical" evidence="2">
    <location>
        <begin position="66"/>
        <end position="86"/>
    </location>
</feature>
<feature type="transmembrane region" description="Helical" evidence="2">
    <location>
        <begin position="115"/>
        <end position="135"/>
    </location>
</feature>
<feature type="transmembrane region" description="Helical" evidence="2">
    <location>
        <begin position="147"/>
        <end position="167"/>
    </location>
</feature>
<feature type="transmembrane region" description="Helical" evidence="2">
    <location>
        <begin position="171"/>
        <end position="191"/>
    </location>
</feature>
<feature type="transmembrane region" description="Helical" evidence="2">
    <location>
        <begin position="207"/>
        <end position="227"/>
    </location>
</feature>
<feature type="transmembrane region" description="Helical" evidence="2">
    <location>
        <begin position="234"/>
        <end position="254"/>
    </location>
</feature>
<feature type="region of interest" description="Disordered" evidence="3">
    <location>
        <begin position="285"/>
        <end position="322"/>
    </location>
</feature>
<feature type="compositionally biased region" description="Polar residues" evidence="3">
    <location>
        <begin position="285"/>
        <end position="295"/>
    </location>
</feature>
<feature type="compositionally biased region" description="Basic residues" evidence="3">
    <location>
        <begin position="299"/>
        <end position="310"/>
    </location>
</feature>
<feature type="compositionally biased region" description="Polar residues" evidence="3">
    <location>
        <begin position="311"/>
        <end position="322"/>
    </location>
</feature>
<feature type="sequence conflict" description="In Ref. 1; ABF18019." evidence="4" ref="1">
    <original>W</original>
    <variation>C</variation>
    <location>
        <position position="201"/>
    </location>
</feature>
<feature type="sequence conflict" description="In Ref. 1; ABF18019." evidence="4" ref="1">
    <original>S</original>
    <variation>G</variation>
    <location>
        <position position="328"/>
    </location>
</feature>
<name>ELVL1_AEDAE</name>
<proteinExistence type="evidence at transcript level"/>
<keyword id="KW-0275">Fatty acid biosynthesis</keyword>
<keyword id="KW-0276">Fatty acid metabolism</keyword>
<keyword id="KW-0444">Lipid biosynthesis</keyword>
<keyword id="KW-0443">Lipid metabolism</keyword>
<keyword id="KW-0472">Membrane</keyword>
<keyword id="KW-1185">Reference proteome</keyword>
<keyword id="KW-0808">Transferase</keyword>
<keyword id="KW-0812">Transmembrane</keyword>
<keyword id="KW-1133">Transmembrane helix</keyword>